<dbReference type="EC" id="6.1.1.3" evidence="1"/>
<dbReference type="EMBL" id="CP000468">
    <property type="protein sequence ID" value="ABJ01092.1"/>
    <property type="molecule type" value="Genomic_DNA"/>
</dbReference>
<dbReference type="RefSeq" id="WP_001144202.1">
    <property type="nucleotide sequence ID" value="NZ_CADILS010000002.1"/>
</dbReference>
<dbReference type="SMR" id="A1ABQ2"/>
<dbReference type="GeneID" id="93775932"/>
<dbReference type="KEGG" id="ecv:APECO1_791"/>
<dbReference type="HOGENOM" id="CLU_008554_0_1_6"/>
<dbReference type="Proteomes" id="UP000008216">
    <property type="component" value="Chromosome"/>
</dbReference>
<dbReference type="GO" id="GO:0005829">
    <property type="term" value="C:cytosol"/>
    <property type="evidence" value="ECO:0007669"/>
    <property type="project" value="TreeGrafter"/>
</dbReference>
<dbReference type="GO" id="GO:0005524">
    <property type="term" value="F:ATP binding"/>
    <property type="evidence" value="ECO:0007669"/>
    <property type="project" value="UniProtKB-UniRule"/>
</dbReference>
<dbReference type="GO" id="GO:0046872">
    <property type="term" value="F:metal ion binding"/>
    <property type="evidence" value="ECO:0007669"/>
    <property type="project" value="UniProtKB-KW"/>
</dbReference>
<dbReference type="GO" id="GO:0004829">
    <property type="term" value="F:threonine-tRNA ligase activity"/>
    <property type="evidence" value="ECO:0007669"/>
    <property type="project" value="UniProtKB-UniRule"/>
</dbReference>
<dbReference type="GO" id="GO:0000049">
    <property type="term" value="F:tRNA binding"/>
    <property type="evidence" value="ECO:0007669"/>
    <property type="project" value="UniProtKB-KW"/>
</dbReference>
<dbReference type="GO" id="GO:0006435">
    <property type="term" value="P:threonyl-tRNA aminoacylation"/>
    <property type="evidence" value="ECO:0007669"/>
    <property type="project" value="UniProtKB-UniRule"/>
</dbReference>
<dbReference type="CDD" id="cd01667">
    <property type="entry name" value="TGS_ThrRS"/>
    <property type="match status" value="1"/>
</dbReference>
<dbReference type="CDD" id="cd00860">
    <property type="entry name" value="ThrRS_anticodon"/>
    <property type="match status" value="1"/>
</dbReference>
<dbReference type="CDD" id="cd00771">
    <property type="entry name" value="ThrRS_core"/>
    <property type="match status" value="1"/>
</dbReference>
<dbReference type="FunFam" id="3.10.20.30:FF:000005">
    <property type="entry name" value="Threonine--tRNA ligase"/>
    <property type="match status" value="1"/>
</dbReference>
<dbReference type="FunFam" id="3.30.54.20:FF:000002">
    <property type="entry name" value="Threonine--tRNA ligase"/>
    <property type="match status" value="1"/>
</dbReference>
<dbReference type="FunFam" id="3.30.930.10:FF:000002">
    <property type="entry name" value="Threonine--tRNA ligase"/>
    <property type="match status" value="1"/>
</dbReference>
<dbReference type="FunFam" id="3.40.50.800:FF:000001">
    <property type="entry name" value="Threonine--tRNA ligase"/>
    <property type="match status" value="1"/>
</dbReference>
<dbReference type="FunFam" id="3.30.980.10:FF:000005">
    <property type="entry name" value="Threonyl-tRNA synthetase, mitochondrial"/>
    <property type="match status" value="1"/>
</dbReference>
<dbReference type="Gene3D" id="3.10.20.30">
    <property type="match status" value="1"/>
</dbReference>
<dbReference type="Gene3D" id="3.30.54.20">
    <property type="match status" value="1"/>
</dbReference>
<dbReference type="Gene3D" id="3.40.50.800">
    <property type="entry name" value="Anticodon-binding domain"/>
    <property type="match status" value="1"/>
</dbReference>
<dbReference type="Gene3D" id="3.30.930.10">
    <property type="entry name" value="Bira Bifunctional Protein, Domain 2"/>
    <property type="match status" value="1"/>
</dbReference>
<dbReference type="Gene3D" id="3.30.980.10">
    <property type="entry name" value="Threonyl-trna Synthetase, Chain A, domain 2"/>
    <property type="match status" value="1"/>
</dbReference>
<dbReference type="HAMAP" id="MF_00184">
    <property type="entry name" value="Thr_tRNA_synth"/>
    <property type="match status" value="1"/>
</dbReference>
<dbReference type="InterPro" id="IPR002314">
    <property type="entry name" value="aa-tRNA-synt_IIb"/>
</dbReference>
<dbReference type="InterPro" id="IPR006195">
    <property type="entry name" value="aa-tRNA-synth_II"/>
</dbReference>
<dbReference type="InterPro" id="IPR045864">
    <property type="entry name" value="aa-tRNA-synth_II/BPL/LPL"/>
</dbReference>
<dbReference type="InterPro" id="IPR004154">
    <property type="entry name" value="Anticodon-bd"/>
</dbReference>
<dbReference type="InterPro" id="IPR036621">
    <property type="entry name" value="Anticodon-bd_dom_sf"/>
</dbReference>
<dbReference type="InterPro" id="IPR012675">
    <property type="entry name" value="Beta-grasp_dom_sf"/>
</dbReference>
<dbReference type="InterPro" id="IPR004095">
    <property type="entry name" value="TGS"/>
</dbReference>
<dbReference type="InterPro" id="IPR012676">
    <property type="entry name" value="TGS-like"/>
</dbReference>
<dbReference type="InterPro" id="IPR002320">
    <property type="entry name" value="Thr-tRNA-ligase_IIa"/>
</dbReference>
<dbReference type="InterPro" id="IPR018163">
    <property type="entry name" value="Thr/Ala-tRNA-synth_IIc_edit"/>
</dbReference>
<dbReference type="InterPro" id="IPR047246">
    <property type="entry name" value="ThrRS_anticodon"/>
</dbReference>
<dbReference type="InterPro" id="IPR033728">
    <property type="entry name" value="ThrRS_core"/>
</dbReference>
<dbReference type="InterPro" id="IPR012947">
    <property type="entry name" value="tRNA_SAD"/>
</dbReference>
<dbReference type="NCBIfam" id="TIGR00418">
    <property type="entry name" value="thrS"/>
    <property type="match status" value="1"/>
</dbReference>
<dbReference type="PANTHER" id="PTHR11451:SF44">
    <property type="entry name" value="THREONINE--TRNA LIGASE, CHLOROPLASTIC_MITOCHONDRIAL 2"/>
    <property type="match status" value="1"/>
</dbReference>
<dbReference type="PANTHER" id="PTHR11451">
    <property type="entry name" value="THREONINE-TRNA LIGASE"/>
    <property type="match status" value="1"/>
</dbReference>
<dbReference type="Pfam" id="PF03129">
    <property type="entry name" value="HGTP_anticodon"/>
    <property type="match status" value="1"/>
</dbReference>
<dbReference type="Pfam" id="PF02824">
    <property type="entry name" value="TGS"/>
    <property type="match status" value="1"/>
</dbReference>
<dbReference type="Pfam" id="PF00587">
    <property type="entry name" value="tRNA-synt_2b"/>
    <property type="match status" value="1"/>
</dbReference>
<dbReference type="Pfam" id="PF07973">
    <property type="entry name" value="tRNA_SAD"/>
    <property type="match status" value="1"/>
</dbReference>
<dbReference type="PRINTS" id="PR01047">
    <property type="entry name" value="TRNASYNTHTHR"/>
</dbReference>
<dbReference type="SMART" id="SM00863">
    <property type="entry name" value="tRNA_SAD"/>
    <property type="match status" value="1"/>
</dbReference>
<dbReference type="SUPFAM" id="SSF52954">
    <property type="entry name" value="Class II aaRS ABD-related"/>
    <property type="match status" value="1"/>
</dbReference>
<dbReference type="SUPFAM" id="SSF55681">
    <property type="entry name" value="Class II aaRS and biotin synthetases"/>
    <property type="match status" value="1"/>
</dbReference>
<dbReference type="SUPFAM" id="SSF81271">
    <property type="entry name" value="TGS-like"/>
    <property type="match status" value="1"/>
</dbReference>
<dbReference type="SUPFAM" id="SSF55186">
    <property type="entry name" value="ThrRS/AlaRS common domain"/>
    <property type="match status" value="1"/>
</dbReference>
<dbReference type="PROSITE" id="PS50862">
    <property type="entry name" value="AA_TRNA_LIGASE_II"/>
    <property type="match status" value="1"/>
</dbReference>
<dbReference type="PROSITE" id="PS51880">
    <property type="entry name" value="TGS"/>
    <property type="match status" value="1"/>
</dbReference>
<feature type="chain" id="PRO_1000020383" description="Threonine--tRNA ligase">
    <location>
        <begin position="1"/>
        <end position="642"/>
    </location>
</feature>
<feature type="domain" description="TGS" evidence="2">
    <location>
        <begin position="1"/>
        <end position="61"/>
    </location>
</feature>
<feature type="region of interest" description="Catalytic" evidence="1">
    <location>
        <begin position="243"/>
        <end position="534"/>
    </location>
</feature>
<feature type="binding site" evidence="1">
    <location>
        <position position="334"/>
    </location>
    <ligand>
        <name>Zn(2+)</name>
        <dbReference type="ChEBI" id="CHEBI:29105"/>
    </ligand>
</feature>
<feature type="binding site" evidence="1">
    <location>
        <position position="385"/>
    </location>
    <ligand>
        <name>Zn(2+)</name>
        <dbReference type="ChEBI" id="CHEBI:29105"/>
    </ligand>
</feature>
<feature type="binding site" evidence="1">
    <location>
        <position position="511"/>
    </location>
    <ligand>
        <name>Zn(2+)</name>
        <dbReference type="ChEBI" id="CHEBI:29105"/>
    </ligand>
</feature>
<feature type="modified residue" description="N6-acetyllysine" evidence="1">
    <location>
        <position position="286"/>
    </location>
</feature>
<reference key="1">
    <citation type="journal article" date="2007" name="J. Bacteriol.">
        <title>The genome sequence of avian pathogenic Escherichia coli strain O1:K1:H7 shares strong similarities with human extraintestinal pathogenic E. coli genomes.</title>
        <authorList>
            <person name="Johnson T.J."/>
            <person name="Kariyawasam S."/>
            <person name="Wannemuehler Y."/>
            <person name="Mangiamele P."/>
            <person name="Johnson S.J."/>
            <person name="Doetkott C."/>
            <person name="Skyberg J.A."/>
            <person name="Lynne A.M."/>
            <person name="Johnson J.R."/>
            <person name="Nolan L.K."/>
        </authorList>
    </citation>
    <scope>NUCLEOTIDE SEQUENCE [LARGE SCALE GENOMIC DNA]</scope>
</reference>
<comment type="function">
    <text evidence="1">Catalyzes the attachment of threonine to tRNA(Thr) in a two-step reaction: L-threonine is first activated by ATP to form Thr-AMP and then transferred to the acceptor end of tRNA(Thr). Also edits incorrectly charged L-seryl-tRNA(Thr).</text>
</comment>
<comment type="catalytic activity">
    <reaction evidence="1">
        <text>tRNA(Thr) + L-threonine + ATP = L-threonyl-tRNA(Thr) + AMP + diphosphate + H(+)</text>
        <dbReference type="Rhea" id="RHEA:24624"/>
        <dbReference type="Rhea" id="RHEA-COMP:9670"/>
        <dbReference type="Rhea" id="RHEA-COMP:9704"/>
        <dbReference type="ChEBI" id="CHEBI:15378"/>
        <dbReference type="ChEBI" id="CHEBI:30616"/>
        <dbReference type="ChEBI" id="CHEBI:33019"/>
        <dbReference type="ChEBI" id="CHEBI:57926"/>
        <dbReference type="ChEBI" id="CHEBI:78442"/>
        <dbReference type="ChEBI" id="CHEBI:78534"/>
        <dbReference type="ChEBI" id="CHEBI:456215"/>
        <dbReference type="EC" id="6.1.1.3"/>
    </reaction>
</comment>
<comment type="cofactor">
    <cofactor evidence="1">
        <name>Zn(2+)</name>
        <dbReference type="ChEBI" id="CHEBI:29105"/>
    </cofactor>
    <text evidence="1">Binds 1 zinc ion per subunit.</text>
</comment>
<comment type="subunit">
    <text evidence="1">Homodimer.</text>
</comment>
<comment type="subcellular location">
    <subcellularLocation>
        <location evidence="1">Cytoplasm</location>
    </subcellularLocation>
</comment>
<comment type="similarity">
    <text evidence="1">Belongs to the class-II aminoacyl-tRNA synthetase family.</text>
</comment>
<accession>A1ABQ2</accession>
<proteinExistence type="inferred from homology"/>
<name>SYT_ECOK1</name>
<gene>
    <name evidence="1" type="primary">thrS</name>
    <name type="ordered locus">Ecok1_15980</name>
    <name type="ORF">APECO1_791</name>
</gene>
<protein>
    <recommendedName>
        <fullName evidence="1">Threonine--tRNA ligase</fullName>
        <ecNumber evidence="1">6.1.1.3</ecNumber>
    </recommendedName>
    <alternativeName>
        <fullName evidence="1">Threonyl-tRNA synthetase</fullName>
        <shortName evidence="1">ThrRS</shortName>
    </alternativeName>
</protein>
<organism>
    <name type="scientific">Escherichia coli O1:K1 / APEC</name>
    <dbReference type="NCBI Taxonomy" id="405955"/>
    <lineage>
        <taxon>Bacteria</taxon>
        <taxon>Pseudomonadati</taxon>
        <taxon>Pseudomonadota</taxon>
        <taxon>Gammaproteobacteria</taxon>
        <taxon>Enterobacterales</taxon>
        <taxon>Enterobacteriaceae</taxon>
        <taxon>Escherichia</taxon>
    </lineage>
</organism>
<keyword id="KW-0007">Acetylation</keyword>
<keyword id="KW-0030">Aminoacyl-tRNA synthetase</keyword>
<keyword id="KW-0067">ATP-binding</keyword>
<keyword id="KW-0963">Cytoplasm</keyword>
<keyword id="KW-0436">Ligase</keyword>
<keyword id="KW-0479">Metal-binding</keyword>
<keyword id="KW-0547">Nucleotide-binding</keyword>
<keyword id="KW-0648">Protein biosynthesis</keyword>
<keyword id="KW-1185">Reference proteome</keyword>
<keyword id="KW-0694">RNA-binding</keyword>
<keyword id="KW-0820">tRNA-binding</keyword>
<keyword id="KW-0862">Zinc</keyword>
<evidence type="ECO:0000255" key="1">
    <source>
        <dbReference type="HAMAP-Rule" id="MF_00184"/>
    </source>
</evidence>
<evidence type="ECO:0000255" key="2">
    <source>
        <dbReference type="PROSITE-ProRule" id="PRU01228"/>
    </source>
</evidence>
<sequence>MPVITLPDGSQRHYDHAVSPMDVALDIGPGLAKACIAGRVNGELVDACDLIENDAQLSIITAKDEEGLEIIRHSCAHLLGHAIKQLWPHTKMAIGPVIDNGFYYDVDLDRTLTQEDVEALEKRMHELAEKNYDVIKKKVSWHEARETFANRGESYKVSILDENIAHDDKPGLYFHEEYVDMCRGPHVPNMRFCHHFKLMKTAGAYWRGDSNNKMLQRIYGTAWADKKALNAYLQRLEEAAKRDHRKIGKQLDLYHMQEEAPGMVFWHNDGWTIFRELEVFVRSKLKEYQYQEVKGPFMMDRVLWEKTGHWDNYKDAMFTTSSENREYCIKPMNCPGHVQIFNQGLKSYRDLPLRMAEFGSCHRNEPSGSLHGLMRVRGFTQDDAHIFCTEEQIRDEVNGCIRLVYDMYSTFGFEKIVVKLSTRPEKRIGSDEMWDRAEADLAVALEENNIPFEYQLGEGAFYGPKIEFTLYDCLDRAWQCGTVQLDFSLPSRLSASYVGEDNERKVPVMIHRAILGSMERFIGILTEEFAGFFPTWLAPVQVVIMNITDSQSEYVNELTQKLSNAGIRVKADLRNEKIGFKIREHTLRRVPYMLVCGDKEVESGKVAVRTRRGKDLGSMDVNEVIEKLQQEIRSRSLKQLEE</sequence>